<dbReference type="EMBL" id="U38804">
    <property type="protein sequence ID" value="AAC08091.1"/>
    <property type="molecule type" value="Genomic_DNA"/>
</dbReference>
<dbReference type="PIR" id="S73126">
    <property type="entry name" value="S73126"/>
</dbReference>
<dbReference type="RefSeq" id="NP_053815.1">
    <property type="nucleotide sequence ID" value="NC_000925.1"/>
</dbReference>
<dbReference type="SMR" id="P51205"/>
<dbReference type="GeneID" id="809829"/>
<dbReference type="GO" id="GO:0009507">
    <property type="term" value="C:chloroplast"/>
    <property type="evidence" value="ECO:0007669"/>
    <property type="project" value="UniProtKB-SubCell"/>
</dbReference>
<dbReference type="GO" id="GO:0003700">
    <property type="term" value="F:DNA-binding transcription factor activity"/>
    <property type="evidence" value="ECO:0007669"/>
    <property type="project" value="InterPro"/>
</dbReference>
<dbReference type="GO" id="GO:0000976">
    <property type="term" value="F:transcription cis-regulatory region binding"/>
    <property type="evidence" value="ECO:0007669"/>
    <property type="project" value="TreeGrafter"/>
</dbReference>
<dbReference type="CDD" id="cd08420">
    <property type="entry name" value="PBP2_CysL_like"/>
    <property type="match status" value="1"/>
</dbReference>
<dbReference type="FunFam" id="1.10.10.10:FF:000001">
    <property type="entry name" value="LysR family transcriptional regulator"/>
    <property type="match status" value="1"/>
</dbReference>
<dbReference type="Gene3D" id="3.40.190.290">
    <property type="match status" value="1"/>
</dbReference>
<dbReference type="Gene3D" id="1.10.10.10">
    <property type="entry name" value="Winged helix-like DNA-binding domain superfamily/Winged helix DNA-binding domain"/>
    <property type="match status" value="1"/>
</dbReference>
<dbReference type="InterPro" id="IPR005119">
    <property type="entry name" value="LysR_subst-bd"/>
</dbReference>
<dbReference type="InterPro" id="IPR000847">
    <property type="entry name" value="Tscrpt_reg_HTH_LysR"/>
</dbReference>
<dbReference type="InterPro" id="IPR036388">
    <property type="entry name" value="WH-like_DNA-bd_sf"/>
</dbReference>
<dbReference type="InterPro" id="IPR036390">
    <property type="entry name" value="WH_DNA-bd_sf"/>
</dbReference>
<dbReference type="PANTHER" id="PTHR30126">
    <property type="entry name" value="HTH-TYPE TRANSCRIPTIONAL REGULATOR"/>
    <property type="match status" value="1"/>
</dbReference>
<dbReference type="PANTHER" id="PTHR30126:SF39">
    <property type="entry name" value="HTH-TYPE TRANSCRIPTIONAL REGULATOR CYSL"/>
    <property type="match status" value="1"/>
</dbReference>
<dbReference type="Pfam" id="PF00126">
    <property type="entry name" value="HTH_1"/>
    <property type="match status" value="1"/>
</dbReference>
<dbReference type="Pfam" id="PF03466">
    <property type="entry name" value="LysR_substrate"/>
    <property type="match status" value="1"/>
</dbReference>
<dbReference type="PRINTS" id="PR00039">
    <property type="entry name" value="HTHLYSR"/>
</dbReference>
<dbReference type="SUPFAM" id="SSF53850">
    <property type="entry name" value="Periplasmic binding protein-like II"/>
    <property type="match status" value="1"/>
</dbReference>
<dbReference type="SUPFAM" id="SSF46785">
    <property type="entry name" value="Winged helix' DNA-binding domain"/>
    <property type="match status" value="1"/>
</dbReference>
<dbReference type="PROSITE" id="PS50931">
    <property type="entry name" value="HTH_LYSR"/>
    <property type="match status" value="1"/>
</dbReference>
<sequence>MTDLPFTLDQLRILKAIAKEGSFKKAANSLYVSQPAISLQIQNLERQLNVALFERGNKKATLTEAGSLLLRYGGRILALCEETCRALDDLQNLQGGTLIIGASQTTGTYLMPRLIGLFRQRYPQVAVQLQVHSTRLISWSVANGQVDLAIIGGEVPTELQDVLQVTSYAEDELALILPKSHPFSKLGDIQKEDLYRLRFIALDTQSTIRKVIDKVLSQHGIDSSRFKIEMELNSIEAIKNAVQSGLGAAFVSVSAIAKELELGIVHWAQIENVTIKRMLSIIVNPNRYKSKATETFSQEILTLFVTPSQHKTLGDKL</sequence>
<comment type="function">
    <text evidence="1">Trans-acting transcriptional regulator of RuBisCO genes (rbcL and rbcS) expression.</text>
</comment>
<comment type="subcellular location">
    <subcellularLocation>
        <location>Plastid</location>
        <location>Chloroplast</location>
    </subcellularLocation>
</comment>
<comment type="similarity">
    <text evidence="3">Belongs to the LysR transcriptional regulatory family.</text>
</comment>
<protein>
    <recommendedName>
        <fullName>Probable RuBisCO transcriptional regulator</fullName>
    </recommendedName>
</protein>
<geneLocation type="chloroplast"/>
<organism>
    <name type="scientific">Porphyra purpurea</name>
    <name type="common">Red seaweed</name>
    <name type="synonym">Ulva purpurea</name>
    <dbReference type="NCBI Taxonomy" id="2787"/>
    <lineage>
        <taxon>Eukaryota</taxon>
        <taxon>Rhodophyta</taxon>
        <taxon>Bangiophyceae</taxon>
        <taxon>Bangiales</taxon>
        <taxon>Bangiaceae</taxon>
        <taxon>Porphyra</taxon>
    </lineage>
</organism>
<accession>P51205</accession>
<evidence type="ECO:0000250" key="1"/>
<evidence type="ECO:0000255" key="2">
    <source>
        <dbReference type="PROSITE-ProRule" id="PRU00253"/>
    </source>
</evidence>
<evidence type="ECO:0000305" key="3"/>
<proteinExistence type="inferred from homology"/>
<keyword id="KW-0150">Chloroplast</keyword>
<keyword id="KW-0238">DNA-binding</keyword>
<keyword id="KW-0934">Plastid</keyword>
<keyword id="KW-0804">Transcription</keyword>
<keyword id="KW-0805">Transcription regulation</keyword>
<feature type="chain" id="PRO_0000105773" description="Probable RuBisCO transcriptional regulator">
    <location>
        <begin position="1"/>
        <end position="317"/>
    </location>
</feature>
<feature type="domain" description="HTH lysR-type" evidence="2">
    <location>
        <begin position="6"/>
        <end position="63"/>
    </location>
</feature>
<feature type="DNA-binding region" description="H-T-H motif" evidence="2">
    <location>
        <begin position="23"/>
        <end position="42"/>
    </location>
</feature>
<reference key="1">
    <citation type="journal article" date="1995" name="Plant Mol. Biol. Rep.">
        <title>Complete nucleotide sequence of the Porphyra purpurea chloroplast genome.</title>
        <authorList>
            <person name="Reith M.E."/>
            <person name="Munholland J."/>
        </authorList>
    </citation>
    <scope>NUCLEOTIDE SEQUENCE [LARGE SCALE GENOMIC DNA]</scope>
    <source>
        <strain>Avonport</strain>
    </source>
</reference>
<gene>
    <name type="primary">rbcR</name>
    <name type="synonym">ycf30</name>
</gene>
<name>RBCR_PORPU</name>